<protein>
    <recommendedName>
        <fullName evidence="1">CTP synthase</fullName>
        <ecNumber evidence="1">6.3.4.2</ecNumber>
    </recommendedName>
    <alternativeName>
        <fullName evidence="1">Cytidine 5'-triphosphate synthase</fullName>
    </alternativeName>
    <alternativeName>
        <fullName evidence="1">Cytidine triphosphate synthetase</fullName>
        <shortName evidence="1">CTP synthetase</shortName>
        <shortName evidence="1">CTPS</shortName>
    </alternativeName>
    <alternativeName>
        <fullName evidence="1">UTP--ammonia ligase</fullName>
    </alternativeName>
</protein>
<accession>B4S3A5</accession>
<evidence type="ECO:0000255" key="1">
    <source>
        <dbReference type="HAMAP-Rule" id="MF_01227"/>
    </source>
</evidence>
<keyword id="KW-0067">ATP-binding</keyword>
<keyword id="KW-0315">Glutamine amidotransferase</keyword>
<keyword id="KW-0436">Ligase</keyword>
<keyword id="KW-0460">Magnesium</keyword>
<keyword id="KW-0479">Metal-binding</keyword>
<keyword id="KW-0547">Nucleotide-binding</keyword>
<keyword id="KW-0665">Pyrimidine biosynthesis</keyword>
<dbReference type="EC" id="6.3.4.2" evidence="1"/>
<dbReference type="EMBL" id="CP001108">
    <property type="protein sequence ID" value="ACF45199.1"/>
    <property type="molecule type" value="Genomic_DNA"/>
</dbReference>
<dbReference type="RefSeq" id="WP_012504736.1">
    <property type="nucleotide sequence ID" value="NC_011059.1"/>
</dbReference>
<dbReference type="SMR" id="B4S3A5"/>
<dbReference type="STRING" id="290512.Paes_0139"/>
<dbReference type="MEROPS" id="C26.964"/>
<dbReference type="KEGG" id="paa:Paes_0139"/>
<dbReference type="eggNOG" id="COG0504">
    <property type="taxonomic scope" value="Bacteria"/>
</dbReference>
<dbReference type="HOGENOM" id="CLU_011675_5_0_10"/>
<dbReference type="UniPathway" id="UPA00159">
    <property type="reaction ID" value="UER00277"/>
</dbReference>
<dbReference type="Proteomes" id="UP000002725">
    <property type="component" value="Chromosome"/>
</dbReference>
<dbReference type="GO" id="GO:0005829">
    <property type="term" value="C:cytosol"/>
    <property type="evidence" value="ECO:0007669"/>
    <property type="project" value="TreeGrafter"/>
</dbReference>
<dbReference type="GO" id="GO:0005524">
    <property type="term" value="F:ATP binding"/>
    <property type="evidence" value="ECO:0007669"/>
    <property type="project" value="UniProtKB-KW"/>
</dbReference>
<dbReference type="GO" id="GO:0003883">
    <property type="term" value="F:CTP synthase activity"/>
    <property type="evidence" value="ECO:0007669"/>
    <property type="project" value="UniProtKB-UniRule"/>
</dbReference>
<dbReference type="GO" id="GO:0004359">
    <property type="term" value="F:glutaminase activity"/>
    <property type="evidence" value="ECO:0007669"/>
    <property type="project" value="RHEA"/>
</dbReference>
<dbReference type="GO" id="GO:0042802">
    <property type="term" value="F:identical protein binding"/>
    <property type="evidence" value="ECO:0007669"/>
    <property type="project" value="TreeGrafter"/>
</dbReference>
<dbReference type="GO" id="GO:0046872">
    <property type="term" value="F:metal ion binding"/>
    <property type="evidence" value="ECO:0007669"/>
    <property type="project" value="UniProtKB-KW"/>
</dbReference>
<dbReference type="GO" id="GO:0044210">
    <property type="term" value="P:'de novo' CTP biosynthetic process"/>
    <property type="evidence" value="ECO:0007669"/>
    <property type="project" value="UniProtKB-UniRule"/>
</dbReference>
<dbReference type="GO" id="GO:0019856">
    <property type="term" value="P:pyrimidine nucleobase biosynthetic process"/>
    <property type="evidence" value="ECO:0007669"/>
    <property type="project" value="TreeGrafter"/>
</dbReference>
<dbReference type="CDD" id="cd03113">
    <property type="entry name" value="CTPS_N"/>
    <property type="match status" value="1"/>
</dbReference>
<dbReference type="CDD" id="cd01746">
    <property type="entry name" value="GATase1_CTP_Synthase"/>
    <property type="match status" value="1"/>
</dbReference>
<dbReference type="FunFam" id="3.40.50.300:FF:000009">
    <property type="entry name" value="CTP synthase"/>
    <property type="match status" value="1"/>
</dbReference>
<dbReference type="FunFam" id="3.40.50.880:FF:000002">
    <property type="entry name" value="CTP synthase"/>
    <property type="match status" value="1"/>
</dbReference>
<dbReference type="Gene3D" id="3.40.50.880">
    <property type="match status" value="1"/>
</dbReference>
<dbReference type="Gene3D" id="3.40.50.300">
    <property type="entry name" value="P-loop containing nucleotide triphosphate hydrolases"/>
    <property type="match status" value="1"/>
</dbReference>
<dbReference type="HAMAP" id="MF_01227">
    <property type="entry name" value="PyrG"/>
    <property type="match status" value="1"/>
</dbReference>
<dbReference type="InterPro" id="IPR029062">
    <property type="entry name" value="Class_I_gatase-like"/>
</dbReference>
<dbReference type="InterPro" id="IPR004468">
    <property type="entry name" value="CTP_synthase"/>
</dbReference>
<dbReference type="InterPro" id="IPR017456">
    <property type="entry name" value="CTP_synthase_N"/>
</dbReference>
<dbReference type="InterPro" id="IPR017926">
    <property type="entry name" value="GATASE"/>
</dbReference>
<dbReference type="InterPro" id="IPR033828">
    <property type="entry name" value="GATase1_CTP_Synthase"/>
</dbReference>
<dbReference type="InterPro" id="IPR027417">
    <property type="entry name" value="P-loop_NTPase"/>
</dbReference>
<dbReference type="NCBIfam" id="NF003792">
    <property type="entry name" value="PRK05380.1"/>
    <property type="match status" value="1"/>
</dbReference>
<dbReference type="NCBIfam" id="TIGR00337">
    <property type="entry name" value="PyrG"/>
    <property type="match status" value="1"/>
</dbReference>
<dbReference type="PANTHER" id="PTHR11550">
    <property type="entry name" value="CTP SYNTHASE"/>
    <property type="match status" value="1"/>
</dbReference>
<dbReference type="PANTHER" id="PTHR11550:SF0">
    <property type="entry name" value="CTP SYNTHASE-RELATED"/>
    <property type="match status" value="1"/>
</dbReference>
<dbReference type="Pfam" id="PF06418">
    <property type="entry name" value="CTP_synth_N"/>
    <property type="match status" value="1"/>
</dbReference>
<dbReference type="Pfam" id="PF00117">
    <property type="entry name" value="GATase"/>
    <property type="match status" value="1"/>
</dbReference>
<dbReference type="SUPFAM" id="SSF52317">
    <property type="entry name" value="Class I glutamine amidotransferase-like"/>
    <property type="match status" value="1"/>
</dbReference>
<dbReference type="SUPFAM" id="SSF52540">
    <property type="entry name" value="P-loop containing nucleoside triphosphate hydrolases"/>
    <property type="match status" value="1"/>
</dbReference>
<dbReference type="PROSITE" id="PS51273">
    <property type="entry name" value="GATASE_TYPE_1"/>
    <property type="match status" value="1"/>
</dbReference>
<gene>
    <name evidence="1" type="primary">pyrG</name>
    <name type="ordered locus">Paes_0139</name>
</gene>
<organism>
    <name type="scientific">Prosthecochloris aestuarii (strain DSM 271 / SK 413)</name>
    <dbReference type="NCBI Taxonomy" id="290512"/>
    <lineage>
        <taxon>Bacteria</taxon>
        <taxon>Pseudomonadati</taxon>
        <taxon>Chlorobiota</taxon>
        <taxon>Chlorobiia</taxon>
        <taxon>Chlorobiales</taxon>
        <taxon>Chlorobiaceae</taxon>
        <taxon>Prosthecochloris</taxon>
    </lineage>
</organism>
<reference key="1">
    <citation type="submission" date="2008-06" db="EMBL/GenBank/DDBJ databases">
        <title>Complete sequence of chromosome of Prosthecochloris aestuarii DSM 271.</title>
        <authorList>
            <consortium name="US DOE Joint Genome Institute"/>
            <person name="Lucas S."/>
            <person name="Copeland A."/>
            <person name="Lapidus A."/>
            <person name="Glavina del Rio T."/>
            <person name="Dalin E."/>
            <person name="Tice H."/>
            <person name="Bruce D."/>
            <person name="Goodwin L."/>
            <person name="Pitluck S."/>
            <person name="Schmutz J."/>
            <person name="Larimer F."/>
            <person name="Land M."/>
            <person name="Hauser L."/>
            <person name="Kyrpides N."/>
            <person name="Anderson I."/>
            <person name="Liu Z."/>
            <person name="Li T."/>
            <person name="Zhao F."/>
            <person name="Overmann J."/>
            <person name="Bryant D.A."/>
            <person name="Richardson P."/>
        </authorList>
    </citation>
    <scope>NUCLEOTIDE SEQUENCE [LARGE SCALE GENOMIC DNA]</scope>
    <source>
        <strain>DSM 271 / SK 413</strain>
    </source>
</reference>
<feature type="chain" id="PRO_1000139520" description="CTP synthase">
    <location>
        <begin position="1"/>
        <end position="564"/>
    </location>
</feature>
<feature type="domain" description="Glutamine amidotransferase type-1" evidence="1">
    <location>
        <begin position="299"/>
        <end position="543"/>
    </location>
</feature>
<feature type="region of interest" description="Amidoligase domain" evidence="1">
    <location>
        <begin position="1"/>
        <end position="272"/>
    </location>
</feature>
<feature type="active site" description="Nucleophile; for glutamine hydrolysis" evidence="1">
    <location>
        <position position="390"/>
    </location>
</feature>
<feature type="active site" evidence="1">
    <location>
        <position position="516"/>
    </location>
</feature>
<feature type="active site" evidence="1">
    <location>
        <position position="518"/>
    </location>
</feature>
<feature type="binding site" evidence="1">
    <location>
        <position position="18"/>
    </location>
    <ligand>
        <name>CTP</name>
        <dbReference type="ChEBI" id="CHEBI:37563"/>
        <note>allosteric inhibitor</note>
    </ligand>
</feature>
<feature type="binding site" evidence="1">
    <location>
        <position position="18"/>
    </location>
    <ligand>
        <name>UTP</name>
        <dbReference type="ChEBI" id="CHEBI:46398"/>
    </ligand>
</feature>
<feature type="binding site" evidence="1">
    <location>
        <begin position="19"/>
        <end position="24"/>
    </location>
    <ligand>
        <name>ATP</name>
        <dbReference type="ChEBI" id="CHEBI:30616"/>
    </ligand>
</feature>
<feature type="binding site" evidence="1">
    <location>
        <position position="59"/>
    </location>
    <ligand>
        <name>L-glutamine</name>
        <dbReference type="ChEBI" id="CHEBI:58359"/>
    </ligand>
</feature>
<feature type="binding site" evidence="1">
    <location>
        <position position="76"/>
    </location>
    <ligand>
        <name>ATP</name>
        <dbReference type="ChEBI" id="CHEBI:30616"/>
    </ligand>
</feature>
<feature type="binding site" evidence="1">
    <location>
        <position position="76"/>
    </location>
    <ligand>
        <name>Mg(2+)</name>
        <dbReference type="ChEBI" id="CHEBI:18420"/>
    </ligand>
</feature>
<feature type="binding site" evidence="1">
    <location>
        <position position="146"/>
    </location>
    <ligand>
        <name>Mg(2+)</name>
        <dbReference type="ChEBI" id="CHEBI:18420"/>
    </ligand>
</feature>
<feature type="binding site" evidence="1">
    <location>
        <begin position="153"/>
        <end position="155"/>
    </location>
    <ligand>
        <name>CTP</name>
        <dbReference type="ChEBI" id="CHEBI:37563"/>
        <note>allosteric inhibitor</note>
    </ligand>
</feature>
<feature type="binding site" evidence="1">
    <location>
        <begin position="193"/>
        <end position="198"/>
    </location>
    <ligand>
        <name>CTP</name>
        <dbReference type="ChEBI" id="CHEBI:37563"/>
        <note>allosteric inhibitor</note>
    </ligand>
</feature>
<feature type="binding site" evidence="1">
    <location>
        <begin position="193"/>
        <end position="198"/>
    </location>
    <ligand>
        <name>UTP</name>
        <dbReference type="ChEBI" id="CHEBI:46398"/>
    </ligand>
</feature>
<feature type="binding site" evidence="1">
    <location>
        <position position="229"/>
    </location>
    <ligand>
        <name>CTP</name>
        <dbReference type="ChEBI" id="CHEBI:37563"/>
        <note>allosteric inhibitor</note>
    </ligand>
</feature>
<feature type="binding site" evidence="1">
    <location>
        <position position="229"/>
    </location>
    <ligand>
        <name>UTP</name>
        <dbReference type="ChEBI" id="CHEBI:46398"/>
    </ligand>
</feature>
<feature type="binding site" evidence="1">
    <location>
        <position position="363"/>
    </location>
    <ligand>
        <name>L-glutamine</name>
        <dbReference type="ChEBI" id="CHEBI:58359"/>
    </ligand>
</feature>
<feature type="binding site" evidence="1">
    <location>
        <begin position="391"/>
        <end position="394"/>
    </location>
    <ligand>
        <name>L-glutamine</name>
        <dbReference type="ChEBI" id="CHEBI:58359"/>
    </ligand>
</feature>
<feature type="binding site" evidence="1">
    <location>
        <position position="414"/>
    </location>
    <ligand>
        <name>L-glutamine</name>
        <dbReference type="ChEBI" id="CHEBI:58359"/>
    </ligand>
</feature>
<feature type="binding site" evidence="1">
    <location>
        <position position="471"/>
    </location>
    <ligand>
        <name>L-glutamine</name>
        <dbReference type="ChEBI" id="CHEBI:58359"/>
    </ligand>
</feature>
<sequence>MARPKNVKHIFVTGGVVSSLGKGILSASLGLLLKSRGLRVAIQKYDPYINVDPGTMSPYQHGEVYVTDDGAETDLDLGHYERFLDEATSQQSNLTMGRVYKSVIDKERQGEYLGGTVQVVPHVIDEIKERMGELAKNSNLDILITEIGGTIGDIESLPFLEAMRQLKLDFGPKNMLNIHLTLVPYIKAACELKTKPTQHSVKMLLETGIQPDILVCRSEKPLSREIKNKVGHFCNLHELDVIGLSDCDTIYGVPLMLLNEKLDIRVLKKLGLKKYKEPDLAYWKEFCNKVQHPTDGEVTIAICGKYTEYPDAYKSILESLVHAGADNNVRVHVRLIRAEDAEENGSDVKTALEGVHGVLVAPGFGDRGIEGKIRFVQYARENNIPFLGICLGMQCASIEFARNVCGLSEANSTEFSKRCRQPVIDLMEHQKKVKEKGGTMRLGSYPCILKEGTKAHQAYDKFLINERHRHRYEFNNEYRRLFEDNGMVFSGTSPNGELVEIVEISNHRWFVAVQFHPEYKSRVHCVHPLFSGFVAAAKEFAHGARQLSFEPEAPSFQVMPGAEN</sequence>
<name>PYRG_PROA2</name>
<proteinExistence type="inferred from homology"/>
<comment type="function">
    <text evidence="1">Catalyzes the ATP-dependent amination of UTP to CTP with either L-glutamine or ammonia as the source of nitrogen. Regulates intracellular CTP levels through interactions with the four ribonucleotide triphosphates.</text>
</comment>
<comment type="catalytic activity">
    <reaction evidence="1">
        <text>UTP + L-glutamine + ATP + H2O = CTP + L-glutamate + ADP + phosphate + 2 H(+)</text>
        <dbReference type="Rhea" id="RHEA:26426"/>
        <dbReference type="ChEBI" id="CHEBI:15377"/>
        <dbReference type="ChEBI" id="CHEBI:15378"/>
        <dbReference type="ChEBI" id="CHEBI:29985"/>
        <dbReference type="ChEBI" id="CHEBI:30616"/>
        <dbReference type="ChEBI" id="CHEBI:37563"/>
        <dbReference type="ChEBI" id="CHEBI:43474"/>
        <dbReference type="ChEBI" id="CHEBI:46398"/>
        <dbReference type="ChEBI" id="CHEBI:58359"/>
        <dbReference type="ChEBI" id="CHEBI:456216"/>
        <dbReference type="EC" id="6.3.4.2"/>
    </reaction>
</comment>
<comment type="catalytic activity">
    <reaction evidence="1">
        <text>L-glutamine + H2O = L-glutamate + NH4(+)</text>
        <dbReference type="Rhea" id="RHEA:15889"/>
        <dbReference type="ChEBI" id="CHEBI:15377"/>
        <dbReference type="ChEBI" id="CHEBI:28938"/>
        <dbReference type="ChEBI" id="CHEBI:29985"/>
        <dbReference type="ChEBI" id="CHEBI:58359"/>
    </reaction>
</comment>
<comment type="catalytic activity">
    <reaction evidence="1">
        <text>UTP + NH4(+) + ATP = CTP + ADP + phosphate + 2 H(+)</text>
        <dbReference type="Rhea" id="RHEA:16597"/>
        <dbReference type="ChEBI" id="CHEBI:15378"/>
        <dbReference type="ChEBI" id="CHEBI:28938"/>
        <dbReference type="ChEBI" id="CHEBI:30616"/>
        <dbReference type="ChEBI" id="CHEBI:37563"/>
        <dbReference type="ChEBI" id="CHEBI:43474"/>
        <dbReference type="ChEBI" id="CHEBI:46398"/>
        <dbReference type="ChEBI" id="CHEBI:456216"/>
    </reaction>
</comment>
<comment type="activity regulation">
    <text evidence="1">Allosterically activated by GTP, when glutamine is the substrate; GTP has no effect on the reaction when ammonia is the substrate. The allosteric effector GTP functions by stabilizing the protein conformation that binds the tetrahedral intermediate(s) formed during glutamine hydrolysis. Inhibited by the product CTP, via allosteric rather than competitive inhibition.</text>
</comment>
<comment type="pathway">
    <text evidence="1">Pyrimidine metabolism; CTP biosynthesis via de novo pathway; CTP from UDP: step 2/2.</text>
</comment>
<comment type="subunit">
    <text evidence="1">Homotetramer.</text>
</comment>
<comment type="miscellaneous">
    <text evidence="1">CTPSs have evolved a hybrid strategy for distinguishing between UTP and CTP. The overlapping regions of the product feedback inhibitory and substrate sites recognize a common feature in both compounds, the triphosphate moiety. To differentiate isosteric substrate and product pyrimidine rings, an additional pocket far from the expected kinase/ligase catalytic site, specifically recognizes the cytosine and ribose portions of the product inhibitor.</text>
</comment>
<comment type="similarity">
    <text evidence="1">Belongs to the CTP synthase family.</text>
</comment>